<feature type="peptide" id="PRO_0000421506" description="Extended FMRFamide-4" evidence="3">
    <location>
        <begin position="1"/>
        <end position="9"/>
    </location>
</feature>
<feature type="modified residue" description="Leucine amide" evidence="3">
    <location>
        <position position="9"/>
    </location>
</feature>
<feature type="unsure residue" description="L or I" evidence="3">
    <location>
        <position position="7"/>
    </location>
</feature>
<feature type="unsure residue" description="L or I" evidence="3">
    <location>
        <position position="9"/>
    </location>
</feature>
<organism>
    <name type="scientific">Karoophasma botterkloofense</name>
    <name type="common">Gladiator</name>
    <name type="synonym">Heel-walker</name>
    <dbReference type="NCBI Taxonomy" id="253132"/>
    <lineage>
        <taxon>Eukaryota</taxon>
        <taxon>Metazoa</taxon>
        <taxon>Ecdysozoa</taxon>
        <taxon>Arthropoda</taxon>
        <taxon>Hexapoda</taxon>
        <taxon>Insecta</taxon>
        <taxon>Pterygota</taxon>
        <taxon>Neoptera</taxon>
        <taxon>Polyneoptera</taxon>
        <taxon>Mantophasmatodea</taxon>
        <taxon>Austrophasmatidae</taxon>
        <taxon>Karoophasma</taxon>
    </lineage>
</organism>
<comment type="function">
    <text evidence="1">FMRFamides and FMRFamide-like peptides are neuropeptides.</text>
</comment>
<comment type="subcellular location">
    <subcellularLocation>
        <location evidence="6">Secreted</location>
    </subcellularLocation>
</comment>
<comment type="similarity">
    <text evidence="2">Belongs to the FARP (FMRF amide related peptide) family.</text>
</comment>
<protein>
    <recommendedName>
        <fullName evidence="4">Extended FMRFamide-4</fullName>
        <shortName evidence="4">FMRFa-4</shortName>
    </recommendedName>
</protein>
<accession>B0M8U3</accession>
<name>FAR4_KARBO</name>
<proteinExistence type="evidence at protein level"/>
<keyword id="KW-0027">Amidation</keyword>
<keyword id="KW-0903">Direct protein sequencing</keyword>
<keyword id="KW-0527">Neuropeptide</keyword>
<keyword id="KW-0964">Secreted</keyword>
<evidence type="ECO:0000250" key="1">
    <source>
        <dbReference type="UniProtKB" id="P34405"/>
    </source>
</evidence>
<evidence type="ECO:0000255" key="2"/>
<evidence type="ECO:0000269" key="3">
    <source>
    </source>
</evidence>
<evidence type="ECO:0000303" key="4">
    <source>
    </source>
</evidence>
<evidence type="ECO:0000305" key="5"/>
<evidence type="ECO:0000305" key="6">
    <source>
    </source>
</evidence>
<reference evidence="5" key="1">
    <citation type="journal article" date="2012" name="Syst. Biol.">
        <title>Peptidomics-based phylogeny and biogeography of Mantophasmatodea (Hexapoda).</title>
        <authorList>
            <person name="Predel R."/>
            <person name="Neupert S."/>
            <person name="Huetteroth W."/>
            <person name="Kahnt J."/>
            <person name="Waidelich D."/>
            <person name="Roth S."/>
        </authorList>
    </citation>
    <scope>PROTEIN SEQUENCE</scope>
    <scope>AMIDATION AT LEU-9</scope>
    <source>
        <tissue evidence="3">Thoracic perisympathetic organs</tissue>
    </source>
</reference>
<dbReference type="GO" id="GO:0005576">
    <property type="term" value="C:extracellular region"/>
    <property type="evidence" value="ECO:0007669"/>
    <property type="project" value="UniProtKB-SubCell"/>
</dbReference>
<dbReference type="GO" id="GO:0007218">
    <property type="term" value="P:neuropeptide signaling pathway"/>
    <property type="evidence" value="ECO:0007669"/>
    <property type="project" value="UniProtKB-KW"/>
</dbReference>
<sequence>GVDSSFLRL</sequence>